<dbReference type="EC" id="6.3.5.-" evidence="1"/>
<dbReference type="EMBL" id="AP009256">
    <property type="protein sequence ID" value="BAF40240.1"/>
    <property type="molecule type" value="Genomic_DNA"/>
</dbReference>
<dbReference type="RefSeq" id="WP_011743747.1">
    <property type="nucleotide sequence ID" value="NZ_CAXVNC010000003.1"/>
</dbReference>
<dbReference type="SMR" id="A1A3F7"/>
<dbReference type="STRING" id="367928.BAD_1459"/>
<dbReference type="PaxDb" id="1680-BADO_1555"/>
<dbReference type="GeneID" id="4557248"/>
<dbReference type="KEGG" id="bad:BAD_1459"/>
<dbReference type="HOGENOM" id="CLU_105899_1_0_11"/>
<dbReference type="Proteomes" id="UP000008702">
    <property type="component" value="Chromosome"/>
</dbReference>
<dbReference type="GO" id="GO:0050566">
    <property type="term" value="F:asparaginyl-tRNA synthase (glutamine-hydrolyzing) activity"/>
    <property type="evidence" value="ECO:0007669"/>
    <property type="project" value="RHEA"/>
</dbReference>
<dbReference type="GO" id="GO:0005524">
    <property type="term" value="F:ATP binding"/>
    <property type="evidence" value="ECO:0007669"/>
    <property type="project" value="UniProtKB-KW"/>
</dbReference>
<dbReference type="GO" id="GO:0050567">
    <property type="term" value="F:glutaminyl-tRNA synthase (glutamine-hydrolyzing) activity"/>
    <property type="evidence" value="ECO:0007669"/>
    <property type="project" value="UniProtKB-UniRule"/>
</dbReference>
<dbReference type="GO" id="GO:0070681">
    <property type="term" value="P:glutaminyl-tRNAGln biosynthesis via transamidation"/>
    <property type="evidence" value="ECO:0007669"/>
    <property type="project" value="TreeGrafter"/>
</dbReference>
<dbReference type="GO" id="GO:0006450">
    <property type="term" value="P:regulation of translational fidelity"/>
    <property type="evidence" value="ECO:0007669"/>
    <property type="project" value="InterPro"/>
</dbReference>
<dbReference type="GO" id="GO:0006412">
    <property type="term" value="P:translation"/>
    <property type="evidence" value="ECO:0007669"/>
    <property type="project" value="UniProtKB-UniRule"/>
</dbReference>
<dbReference type="Gene3D" id="1.10.20.60">
    <property type="entry name" value="Glu-tRNAGln amidotransferase C subunit, N-terminal domain"/>
    <property type="match status" value="1"/>
</dbReference>
<dbReference type="HAMAP" id="MF_00122">
    <property type="entry name" value="GatC"/>
    <property type="match status" value="1"/>
</dbReference>
<dbReference type="InterPro" id="IPR036113">
    <property type="entry name" value="Asp/Glu-ADT_sf_sub_c"/>
</dbReference>
<dbReference type="InterPro" id="IPR003837">
    <property type="entry name" value="GatC"/>
</dbReference>
<dbReference type="NCBIfam" id="TIGR00135">
    <property type="entry name" value="gatC"/>
    <property type="match status" value="1"/>
</dbReference>
<dbReference type="PANTHER" id="PTHR15004">
    <property type="entry name" value="GLUTAMYL-TRNA(GLN) AMIDOTRANSFERASE SUBUNIT C, MITOCHONDRIAL"/>
    <property type="match status" value="1"/>
</dbReference>
<dbReference type="PANTHER" id="PTHR15004:SF0">
    <property type="entry name" value="GLUTAMYL-TRNA(GLN) AMIDOTRANSFERASE SUBUNIT C, MITOCHONDRIAL"/>
    <property type="match status" value="1"/>
</dbReference>
<dbReference type="Pfam" id="PF02686">
    <property type="entry name" value="GatC"/>
    <property type="match status" value="1"/>
</dbReference>
<dbReference type="SUPFAM" id="SSF141000">
    <property type="entry name" value="Glu-tRNAGln amidotransferase C subunit"/>
    <property type="match status" value="1"/>
</dbReference>
<accession>A1A3F7</accession>
<comment type="function">
    <text evidence="1">Allows the formation of correctly charged Asn-tRNA(Asn) or Gln-tRNA(Gln) through the transamidation of misacylated Asp-tRNA(Asn) or Glu-tRNA(Gln) in organisms which lack either or both of asparaginyl-tRNA or glutaminyl-tRNA synthetases. The reaction takes place in the presence of glutamine and ATP through an activated phospho-Asp-tRNA(Asn) or phospho-Glu-tRNA(Gln).</text>
</comment>
<comment type="catalytic activity">
    <reaction evidence="1">
        <text>L-glutamyl-tRNA(Gln) + L-glutamine + ATP + H2O = L-glutaminyl-tRNA(Gln) + L-glutamate + ADP + phosphate + H(+)</text>
        <dbReference type="Rhea" id="RHEA:17521"/>
        <dbReference type="Rhea" id="RHEA-COMP:9681"/>
        <dbReference type="Rhea" id="RHEA-COMP:9684"/>
        <dbReference type="ChEBI" id="CHEBI:15377"/>
        <dbReference type="ChEBI" id="CHEBI:15378"/>
        <dbReference type="ChEBI" id="CHEBI:29985"/>
        <dbReference type="ChEBI" id="CHEBI:30616"/>
        <dbReference type="ChEBI" id="CHEBI:43474"/>
        <dbReference type="ChEBI" id="CHEBI:58359"/>
        <dbReference type="ChEBI" id="CHEBI:78520"/>
        <dbReference type="ChEBI" id="CHEBI:78521"/>
        <dbReference type="ChEBI" id="CHEBI:456216"/>
    </reaction>
</comment>
<comment type="catalytic activity">
    <reaction evidence="1">
        <text>L-aspartyl-tRNA(Asn) + L-glutamine + ATP + H2O = L-asparaginyl-tRNA(Asn) + L-glutamate + ADP + phosphate + 2 H(+)</text>
        <dbReference type="Rhea" id="RHEA:14513"/>
        <dbReference type="Rhea" id="RHEA-COMP:9674"/>
        <dbReference type="Rhea" id="RHEA-COMP:9677"/>
        <dbReference type="ChEBI" id="CHEBI:15377"/>
        <dbReference type="ChEBI" id="CHEBI:15378"/>
        <dbReference type="ChEBI" id="CHEBI:29985"/>
        <dbReference type="ChEBI" id="CHEBI:30616"/>
        <dbReference type="ChEBI" id="CHEBI:43474"/>
        <dbReference type="ChEBI" id="CHEBI:58359"/>
        <dbReference type="ChEBI" id="CHEBI:78515"/>
        <dbReference type="ChEBI" id="CHEBI:78516"/>
        <dbReference type="ChEBI" id="CHEBI:456216"/>
    </reaction>
</comment>
<comment type="subunit">
    <text evidence="1">Heterotrimer of A, B and C subunits.</text>
</comment>
<comment type="similarity">
    <text evidence="1">Belongs to the GatC family.</text>
</comment>
<feature type="chain" id="PRO_1000016076" description="Aspartyl/glutamyl-tRNA(Asn/Gln) amidotransferase subunit C">
    <location>
        <begin position="1"/>
        <end position="98"/>
    </location>
</feature>
<organism>
    <name type="scientific">Bifidobacterium adolescentis (strain ATCC 15703 / DSM 20083 / NCTC 11814 / E194a)</name>
    <dbReference type="NCBI Taxonomy" id="367928"/>
    <lineage>
        <taxon>Bacteria</taxon>
        <taxon>Bacillati</taxon>
        <taxon>Actinomycetota</taxon>
        <taxon>Actinomycetes</taxon>
        <taxon>Bifidobacteriales</taxon>
        <taxon>Bifidobacteriaceae</taxon>
        <taxon>Bifidobacterium</taxon>
    </lineage>
</organism>
<reference key="1">
    <citation type="submission" date="2006-12" db="EMBL/GenBank/DDBJ databases">
        <title>Bifidobacterium adolescentis complete genome sequence.</title>
        <authorList>
            <person name="Suzuki T."/>
            <person name="Tsuda Y."/>
            <person name="Kanou N."/>
            <person name="Inoue T."/>
            <person name="Kumazaki K."/>
            <person name="Nagano S."/>
            <person name="Hirai S."/>
            <person name="Tanaka K."/>
            <person name="Watanabe K."/>
        </authorList>
    </citation>
    <scope>NUCLEOTIDE SEQUENCE [LARGE SCALE GENOMIC DNA]</scope>
    <source>
        <strain>ATCC 15703 / DSM 20083 / NCTC 11814 / E194a</strain>
    </source>
</reference>
<gene>
    <name evidence="1" type="primary">gatC</name>
    <name type="ordered locus">BAD_1459</name>
</gene>
<proteinExistence type="inferred from homology"/>
<keyword id="KW-0067">ATP-binding</keyword>
<keyword id="KW-0436">Ligase</keyword>
<keyword id="KW-0547">Nucleotide-binding</keyword>
<keyword id="KW-0648">Protein biosynthesis</keyword>
<keyword id="KW-1185">Reference proteome</keyword>
<protein>
    <recommendedName>
        <fullName evidence="1">Aspartyl/glutamyl-tRNA(Asn/Gln) amidotransferase subunit C</fullName>
        <shortName evidence="1">Asp/Glu-ADT subunit C</shortName>
        <ecNumber evidence="1">6.3.5.-</ecNumber>
    </recommendedName>
</protein>
<sequence>MPTFTKEEIVHLGDLARIALTDEEITRLQGDLNVIAESINKVQEVATDDVEPTANPVPLEAYLRPDVPETPLTQAEATAGAPVSEAGMFVAPRILGQE</sequence>
<evidence type="ECO:0000255" key="1">
    <source>
        <dbReference type="HAMAP-Rule" id="MF_00122"/>
    </source>
</evidence>
<name>GATC_BIFAA</name>